<name>RL25_ACTP2</name>
<protein>
    <recommendedName>
        <fullName evidence="1">Large ribosomal subunit protein bL25</fullName>
    </recommendedName>
    <alternativeName>
        <fullName evidence="2">50S ribosomal protein L25</fullName>
    </alternativeName>
</protein>
<organism>
    <name type="scientific">Actinobacillus pleuropneumoniae serotype 5b (strain L20)</name>
    <dbReference type="NCBI Taxonomy" id="416269"/>
    <lineage>
        <taxon>Bacteria</taxon>
        <taxon>Pseudomonadati</taxon>
        <taxon>Pseudomonadota</taxon>
        <taxon>Gammaproteobacteria</taxon>
        <taxon>Pasteurellales</taxon>
        <taxon>Pasteurellaceae</taxon>
        <taxon>Actinobacillus</taxon>
    </lineage>
</organism>
<feature type="chain" id="PRO_1000052947" description="Large ribosomal subunit protein bL25">
    <location>
        <begin position="1"/>
        <end position="95"/>
    </location>
</feature>
<proteinExistence type="inferred from homology"/>
<comment type="function">
    <text evidence="1">This is one of the proteins that binds to the 5S RNA in the ribosome where it forms part of the central protuberance.</text>
</comment>
<comment type="subunit">
    <text evidence="1">Part of the 50S ribosomal subunit; part of the 5S rRNA/L5/L18/L25 subcomplex. Contacts the 5S rRNA. Binds to the 5S rRNA independently of L5 and L18.</text>
</comment>
<comment type="similarity">
    <text evidence="1">Belongs to the bacterial ribosomal protein bL25 family.</text>
</comment>
<evidence type="ECO:0000255" key="1">
    <source>
        <dbReference type="HAMAP-Rule" id="MF_01336"/>
    </source>
</evidence>
<evidence type="ECO:0000305" key="2"/>
<accession>A3MZK5</accession>
<reference key="1">
    <citation type="journal article" date="2008" name="J. Bacteriol.">
        <title>The complete genome sequence of Actinobacillus pleuropneumoniae L20 (serotype 5b).</title>
        <authorList>
            <person name="Foote S.J."/>
            <person name="Bosse J.T."/>
            <person name="Bouevitch A.B."/>
            <person name="Langford P.R."/>
            <person name="Young N.M."/>
            <person name="Nash J.H.E."/>
        </authorList>
    </citation>
    <scope>NUCLEOTIDE SEQUENCE [LARGE SCALE GENOMIC DNA]</scope>
    <source>
        <strain>L20</strain>
    </source>
</reference>
<gene>
    <name evidence="1" type="primary">rplY</name>
    <name type="ordered locus">APL_0487</name>
</gene>
<sequence>MSFKFEAEVRSAQGKGASRRLRHNGQVPAIIYGGNAEPVSIILDHDKVNNAQAHDAFYNEVLTIVVAGKEEQVKVQAIQRHPTKPKLVHLDFKRV</sequence>
<keyword id="KW-1185">Reference proteome</keyword>
<keyword id="KW-0687">Ribonucleoprotein</keyword>
<keyword id="KW-0689">Ribosomal protein</keyword>
<keyword id="KW-0694">RNA-binding</keyword>
<keyword id="KW-0699">rRNA-binding</keyword>
<dbReference type="EMBL" id="CP000569">
    <property type="protein sequence ID" value="ABN73591.1"/>
    <property type="molecule type" value="Genomic_DNA"/>
</dbReference>
<dbReference type="RefSeq" id="WP_005607259.1">
    <property type="nucleotide sequence ID" value="NC_009053.1"/>
</dbReference>
<dbReference type="SMR" id="A3MZK5"/>
<dbReference type="STRING" id="416269.APL_0487"/>
<dbReference type="EnsemblBacteria" id="ABN73591">
    <property type="protein sequence ID" value="ABN73591"/>
    <property type="gene ID" value="APL_0487"/>
</dbReference>
<dbReference type="KEGG" id="apl:APL_0487"/>
<dbReference type="eggNOG" id="COG1825">
    <property type="taxonomic scope" value="Bacteria"/>
</dbReference>
<dbReference type="HOGENOM" id="CLU_137946_0_0_6"/>
<dbReference type="Proteomes" id="UP000001432">
    <property type="component" value="Chromosome"/>
</dbReference>
<dbReference type="GO" id="GO:0022625">
    <property type="term" value="C:cytosolic large ribosomal subunit"/>
    <property type="evidence" value="ECO:0007669"/>
    <property type="project" value="TreeGrafter"/>
</dbReference>
<dbReference type="GO" id="GO:0008097">
    <property type="term" value="F:5S rRNA binding"/>
    <property type="evidence" value="ECO:0007669"/>
    <property type="project" value="InterPro"/>
</dbReference>
<dbReference type="GO" id="GO:0003735">
    <property type="term" value="F:structural constituent of ribosome"/>
    <property type="evidence" value="ECO:0007669"/>
    <property type="project" value="InterPro"/>
</dbReference>
<dbReference type="GO" id="GO:0006412">
    <property type="term" value="P:translation"/>
    <property type="evidence" value="ECO:0007669"/>
    <property type="project" value="UniProtKB-UniRule"/>
</dbReference>
<dbReference type="CDD" id="cd00495">
    <property type="entry name" value="Ribosomal_L25_TL5_CTC"/>
    <property type="match status" value="1"/>
</dbReference>
<dbReference type="FunFam" id="2.40.240.10:FF:000002">
    <property type="entry name" value="50S ribosomal protein L25"/>
    <property type="match status" value="1"/>
</dbReference>
<dbReference type="Gene3D" id="2.40.240.10">
    <property type="entry name" value="Ribosomal Protein L25, Chain P"/>
    <property type="match status" value="1"/>
</dbReference>
<dbReference type="HAMAP" id="MF_01336">
    <property type="entry name" value="Ribosomal_bL25"/>
    <property type="match status" value="1"/>
</dbReference>
<dbReference type="InterPro" id="IPR020056">
    <property type="entry name" value="Rbsml_bL25/Gln-tRNA_synth_N"/>
</dbReference>
<dbReference type="InterPro" id="IPR011035">
    <property type="entry name" value="Ribosomal_bL25/Gln-tRNA_synth"/>
</dbReference>
<dbReference type="InterPro" id="IPR020055">
    <property type="entry name" value="Ribosomal_bL25_short"/>
</dbReference>
<dbReference type="InterPro" id="IPR029751">
    <property type="entry name" value="Ribosomal_L25_dom"/>
</dbReference>
<dbReference type="InterPro" id="IPR020930">
    <property type="entry name" value="Ribosomal_uL5_bac-type"/>
</dbReference>
<dbReference type="NCBIfam" id="NF004612">
    <property type="entry name" value="PRK05943.1"/>
    <property type="match status" value="1"/>
</dbReference>
<dbReference type="PANTHER" id="PTHR33284">
    <property type="entry name" value="RIBOSOMAL PROTEIN L25/GLN-TRNA SYNTHETASE, ANTI-CODON-BINDING DOMAIN-CONTAINING PROTEIN"/>
    <property type="match status" value="1"/>
</dbReference>
<dbReference type="PANTHER" id="PTHR33284:SF1">
    <property type="entry name" value="RIBOSOMAL PROTEIN L25_GLN-TRNA SYNTHETASE, ANTI-CODON-BINDING DOMAIN-CONTAINING PROTEIN"/>
    <property type="match status" value="1"/>
</dbReference>
<dbReference type="Pfam" id="PF01386">
    <property type="entry name" value="Ribosomal_L25p"/>
    <property type="match status" value="1"/>
</dbReference>
<dbReference type="SUPFAM" id="SSF50715">
    <property type="entry name" value="Ribosomal protein L25-like"/>
    <property type="match status" value="1"/>
</dbReference>